<sequence length="279" mass="29525">MKLCGFEAGLDKPFFLIAGPCVIESRDMAFETAGALKEICVELGIPFIYKSSYDKANRSSGKSYRGMGMEKGLEILADVKKQLGVPVLTDVHAIDEIPAVAAAVDVLQTPAFLCRQTDFIHAVAASGRPVNIKKGQFLAPGDMKNVVDKAREANGGADTIMVCERGASFGYNNLVSDMRSLAIMRETGCPVVFDATHSVQLPGGQGTASGGQREFVPVLARAAVAVGIAGLFMESHPDPAKALSDGPNAWPLPKMKALLATLKEIDALVKAHGFMEMAG</sequence>
<gene>
    <name evidence="1" type="primary">kdsA</name>
    <name type="ordered locus">AZOSEA35190</name>
    <name type="ORF">ebA6160</name>
</gene>
<evidence type="ECO:0000255" key="1">
    <source>
        <dbReference type="HAMAP-Rule" id="MF_00056"/>
    </source>
</evidence>
<dbReference type="EC" id="2.5.1.55" evidence="1"/>
<dbReference type="EMBL" id="CR555306">
    <property type="protein sequence ID" value="CAI09644.1"/>
    <property type="molecule type" value="Genomic_DNA"/>
</dbReference>
<dbReference type="RefSeq" id="WP_011239303.1">
    <property type="nucleotide sequence ID" value="NC_006513.1"/>
</dbReference>
<dbReference type="SMR" id="Q5NZ70"/>
<dbReference type="STRING" id="76114.ebA6160"/>
<dbReference type="KEGG" id="eba:ebA6160"/>
<dbReference type="eggNOG" id="COG2877">
    <property type="taxonomic scope" value="Bacteria"/>
</dbReference>
<dbReference type="HOGENOM" id="CLU_036666_0_0_4"/>
<dbReference type="OrthoDB" id="9776934at2"/>
<dbReference type="UniPathway" id="UPA00030"/>
<dbReference type="UniPathway" id="UPA00357">
    <property type="reaction ID" value="UER00474"/>
</dbReference>
<dbReference type="Proteomes" id="UP000006552">
    <property type="component" value="Chromosome"/>
</dbReference>
<dbReference type="GO" id="GO:0005737">
    <property type="term" value="C:cytoplasm"/>
    <property type="evidence" value="ECO:0007669"/>
    <property type="project" value="UniProtKB-SubCell"/>
</dbReference>
<dbReference type="GO" id="GO:0008676">
    <property type="term" value="F:3-deoxy-8-phosphooctulonate synthase activity"/>
    <property type="evidence" value="ECO:0007669"/>
    <property type="project" value="UniProtKB-UniRule"/>
</dbReference>
<dbReference type="GO" id="GO:0019294">
    <property type="term" value="P:keto-3-deoxy-D-manno-octulosonic acid biosynthetic process"/>
    <property type="evidence" value="ECO:0007669"/>
    <property type="project" value="UniProtKB-UniRule"/>
</dbReference>
<dbReference type="Gene3D" id="3.20.20.70">
    <property type="entry name" value="Aldolase class I"/>
    <property type="match status" value="1"/>
</dbReference>
<dbReference type="HAMAP" id="MF_00056">
    <property type="entry name" value="KDO8P_synth"/>
    <property type="match status" value="1"/>
</dbReference>
<dbReference type="InterPro" id="IPR013785">
    <property type="entry name" value="Aldolase_TIM"/>
</dbReference>
<dbReference type="InterPro" id="IPR006218">
    <property type="entry name" value="DAHP1/KDSA"/>
</dbReference>
<dbReference type="InterPro" id="IPR006269">
    <property type="entry name" value="KDO8P_synthase"/>
</dbReference>
<dbReference type="NCBIfam" id="TIGR01362">
    <property type="entry name" value="KDO8P_synth"/>
    <property type="match status" value="1"/>
</dbReference>
<dbReference type="NCBIfam" id="NF003543">
    <property type="entry name" value="PRK05198.1"/>
    <property type="match status" value="1"/>
</dbReference>
<dbReference type="PANTHER" id="PTHR21057">
    <property type="entry name" value="PHOSPHO-2-DEHYDRO-3-DEOXYHEPTONATE ALDOLASE"/>
    <property type="match status" value="1"/>
</dbReference>
<dbReference type="Pfam" id="PF00793">
    <property type="entry name" value="DAHP_synth_1"/>
    <property type="match status" value="1"/>
</dbReference>
<dbReference type="SUPFAM" id="SSF51569">
    <property type="entry name" value="Aldolase"/>
    <property type="match status" value="1"/>
</dbReference>
<feature type="chain" id="PRO_0000304431" description="2-dehydro-3-deoxyphosphooctonate aldolase">
    <location>
        <begin position="1"/>
        <end position="279"/>
    </location>
</feature>
<accession>Q5NZ70</accession>
<comment type="catalytic activity">
    <reaction evidence="1">
        <text>D-arabinose 5-phosphate + phosphoenolpyruvate + H2O = 3-deoxy-alpha-D-manno-2-octulosonate-8-phosphate + phosphate</text>
        <dbReference type="Rhea" id="RHEA:14053"/>
        <dbReference type="ChEBI" id="CHEBI:15377"/>
        <dbReference type="ChEBI" id="CHEBI:43474"/>
        <dbReference type="ChEBI" id="CHEBI:57693"/>
        <dbReference type="ChEBI" id="CHEBI:58702"/>
        <dbReference type="ChEBI" id="CHEBI:85985"/>
        <dbReference type="EC" id="2.5.1.55"/>
    </reaction>
</comment>
<comment type="pathway">
    <text evidence="1">Carbohydrate biosynthesis; 3-deoxy-D-manno-octulosonate biosynthesis; 3-deoxy-D-manno-octulosonate from D-ribulose 5-phosphate: step 2/3.</text>
</comment>
<comment type="pathway">
    <text evidence="1">Bacterial outer membrane biogenesis; lipopolysaccharide biosynthesis.</text>
</comment>
<comment type="subcellular location">
    <subcellularLocation>
        <location evidence="1">Cytoplasm</location>
    </subcellularLocation>
</comment>
<comment type="similarity">
    <text evidence="1">Belongs to the KdsA family.</text>
</comment>
<proteinExistence type="inferred from homology"/>
<name>KDSA_AROAE</name>
<organism>
    <name type="scientific">Aromatoleum aromaticum (strain DSM 19018 / LMG 30748 / EbN1)</name>
    <name type="common">Azoarcus sp. (strain EbN1)</name>
    <dbReference type="NCBI Taxonomy" id="76114"/>
    <lineage>
        <taxon>Bacteria</taxon>
        <taxon>Pseudomonadati</taxon>
        <taxon>Pseudomonadota</taxon>
        <taxon>Betaproteobacteria</taxon>
        <taxon>Rhodocyclales</taxon>
        <taxon>Rhodocyclaceae</taxon>
        <taxon>Aromatoleum</taxon>
    </lineage>
</organism>
<reference key="1">
    <citation type="journal article" date="2005" name="Arch. Microbiol.">
        <title>The genome sequence of an anaerobic aromatic-degrading denitrifying bacterium, strain EbN1.</title>
        <authorList>
            <person name="Rabus R."/>
            <person name="Kube M."/>
            <person name="Heider J."/>
            <person name="Beck A."/>
            <person name="Heitmann K."/>
            <person name="Widdel F."/>
            <person name="Reinhardt R."/>
        </authorList>
    </citation>
    <scope>NUCLEOTIDE SEQUENCE [LARGE SCALE GENOMIC DNA]</scope>
    <source>
        <strain>DSM 19018 / LMG 30748 / EbN1</strain>
    </source>
</reference>
<keyword id="KW-0963">Cytoplasm</keyword>
<keyword id="KW-0448">Lipopolysaccharide biosynthesis</keyword>
<keyword id="KW-1185">Reference proteome</keyword>
<keyword id="KW-0808">Transferase</keyword>
<protein>
    <recommendedName>
        <fullName evidence="1">2-dehydro-3-deoxyphosphooctonate aldolase</fullName>
        <ecNumber evidence="1">2.5.1.55</ecNumber>
    </recommendedName>
    <alternativeName>
        <fullName evidence="1">3-deoxy-D-manno-octulosonic acid 8-phosphate synthase</fullName>
    </alternativeName>
    <alternativeName>
        <fullName evidence="1">KDO-8-phosphate synthase</fullName>
        <shortName evidence="1">KDO 8-P synthase</shortName>
        <shortName evidence="1">KDOPS</shortName>
    </alternativeName>
    <alternativeName>
        <fullName evidence="1">Phospho-2-dehydro-3-deoxyoctonate aldolase</fullName>
    </alternativeName>
</protein>